<proteinExistence type="inferred from homology"/>
<dbReference type="EMBL" id="AM263198">
    <property type="protein sequence ID" value="CAK20739.1"/>
    <property type="molecule type" value="Genomic_DNA"/>
</dbReference>
<dbReference type="RefSeq" id="WP_003723442.1">
    <property type="nucleotide sequence ID" value="NC_008555.1"/>
</dbReference>
<dbReference type="SMR" id="A0AIA7"/>
<dbReference type="STRING" id="386043.lwe1321"/>
<dbReference type="KEGG" id="lwe:lwe1321"/>
<dbReference type="eggNOG" id="COG3763">
    <property type="taxonomic scope" value="Bacteria"/>
</dbReference>
<dbReference type="HOGENOM" id="CLU_180108_0_1_9"/>
<dbReference type="Proteomes" id="UP000000779">
    <property type="component" value="Chromosome"/>
</dbReference>
<dbReference type="GO" id="GO:0005886">
    <property type="term" value="C:plasma membrane"/>
    <property type="evidence" value="ECO:0007669"/>
    <property type="project" value="UniProtKB-SubCell"/>
</dbReference>
<dbReference type="HAMAP" id="MF_00363">
    <property type="entry name" value="UPF0154"/>
    <property type="match status" value="1"/>
</dbReference>
<dbReference type="InterPro" id="IPR005359">
    <property type="entry name" value="UPF0154"/>
</dbReference>
<dbReference type="NCBIfam" id="NF002503">
    <property type="entry name" value="PRK01844.1"/>
    <property type="match status" value="1"/>
</dbReference>
<dbReference type="Pfam" id="PF03672">
    <property type="entry name" value="UPF0154"/>
    <property type="match status" value="1"/>
</dbReference>
<sequence>MWIYILVGIICLLAGLAGGFFIARRYMMSYLKNNPPINEQMLQMMMAQMGQKPSQKKINQMMSAMNKQQEKEKPKKAKK</sequence>
<comment type="subcellular location">
    <subcellularLocation>
        <location evidence="1">Cell membrane</location>
        <topology evidence="1">Single-pass membrane protein</topology>
    </subcellularLocation>
</comment>
<comment type="similarity">
    <text evidence="1">Belongs to the UPF0154 family.</text>
</comment>
<name>Y1321_LISW6</name>
<evidence type="ECO:0000255" key="1">
    <source>
        <dbReference type="HAMAP-Rule" id="MF_00363"/>
    </source>
</evidence>
<evidence type="ECO:0000256" key="2">
    <source>
        <dbReference type="SAM" id="MobiDB-lite"/>
    </source>
</evidence>
<accession>A0AIA7</accession>
<gene>
    <name type="ordered locus">lwe1321</name>
</gene>
<reference key="1">
    <citation type="journal article" date="2006" name="J. Bacteriol.">
        <title>Whole-genome sequence of Listeria welshimeri reveals common steps in genome reduction with Listeria innocua as compared to Listeria monocytogenes.</title>
        <authorList>
            <person name="Hain T."/>
            <person name="Steinweg C."/>
            <person name="Kuenne C.T."/>
            <person name="Billion A."/>
            <person name="Ghai R."/>
            <person name="Chatterjee S.S."/>
            <person name="Domann E."/>
            <person name="Kaerst U."/>
            <person name="Goesmann A."/>
            <person name="Bekel T."/>
            <person name="Bartels D."/>
            <person name="Kaiser O."/>
            <person name="Meyer F."/>
            <person name="Puehler A."/>
            <person name="Weisshaar B."/>
            <person name="Wehland J."/>
            <person name="Liang C."/>
            <person name="Dandekar T."/>
            <person name="Lampidis R."/>
            <person name="Kreft J."/>
            <person name="Goebel W."/>
            <person name="Chakraborty T."/>
        </authorList>
    </citation>
    <scope>NUCLEOTIDE SEQUENCE [LARGE SCALE GENOMIC DNA]</scope>
    <source>
        <strain>ATCC 35897 / DSM 20650 / CCUG 15529 / CIP 8149 / NCTC 11857 / SLCC 5334 / V8</strain>
    </source>
</reference>
<feature type="chain" id="PRO_1000005634" description="UPF0154 protein lwe1321">
    <location>
        <begin position="1"/>
        <end position="79"/>
    </location>
</feature>
<feature type="transmembrane region" description="Helical" evidence="1">
    <location>
        <begin position="2"/>
        <end position="22"/>
    </location>
</feature>
<feature type="region of interest" description="Disordered" evidence="2">
    <location>
        <begin position="57"/>
        <end position="79"/>
    </location>
</feature>
<feature type="compositionally biased region" description="Polar residues" evidence="2">
    <location>
        <begin position="57"/>
        <end position="66"/>
    </location>
</feature>
<protein>
    <recommendedName>
        <fullName evidence="1">UPF0154 protein lwe1321</fullName>
    </recommendedName>
</protein>
<keyword id="KW-1003">Cell membrane</keyword>
<keyword id="KW-0472">Membrane</keyword>
<keyword id="KW-0812">Transmembrane</keyword>
<keyword id="KW-1133">Transmembrane helix</keyword>
<organism>
    <name type="scientific">Listeria welshimeri serovar 6b (strain ATCC 35897 / DSM 20650 / CCUG 15529 / CIP 8149 / NCTC 11857 / SLCC 5334 / V8)</name>
    <dbReference type="NCBI Taxonomy" id="386043"/>
    <lineage>
        <taxon>Bacteria</taxon>
        <taxon>Bacillati</taxon>
        <taxon>Bacillota</taxon>
        <taxon>Bacilli</taxon>
        <taxon>Bacillales</taxon>
        <taxon>Listeriaceae</taxon>
        <taxon>Listeria</taxon>
    </lineage>
</organism>